<comment type="function">
    <text>Regulatory subunit of the probable trimeric SNF1-related protein kinase (SnRK) complex, which may play a role in a signal transduction cascade regulating gene expression and carbohydrate metabolism in higher plants. The SnRK complex may also be involved in the regulation of fatty acid synthesis by phosphorylation of acetyl-CoA carboxylase and in assimilation of nitrogen by phosphorylating nitrate reductase.</text>
</comment>
<comment type="subunit">
    <text evidence="2 4 5 7 9">Subunit of a probable heterotrimeric complex consisting of an alpha catalytic (KIN10 or KIN11) subunit, and a beta (KINB) and a gamma (KING or SNF4) non-catalytic regulatory subunits (PubMed:17028154, PubMed:25736509). Interacts with SNF4. Interacts with FLZ1, FLZ2, FLZ8, FLZ9, FLZ10, FLZ12, FLZ13 and FLZ14 (PubMed:29945970).</text>
</comment>
<comment type="interaction">
    <interactant intactId="EBI-2042436">
        <id>Q9SCY5</id>
    </interactant>
    <interactant intactId="EBI-2107143">
        <id>Q38997</id>
        <label>KIN10</label>
    </interactant>
    <organismsDiffer>false</organismsDiffer>
    <experiments>20</experiments>
</comment>
<comment type="interaction">
    <interactant intactId="EBI-2042436">
        <id>Q9SCY5</id>
    </interactant>
    <interactant intactId="EBI-307202">
        <id>P92958</id>
        <label>KIN11</label>
    </interactant>
    <organismsDiffer>false</organismsDiffer>
    <experiments>10</experiments>
</comment>
<comment type="interaction">
    <interactant intactId="EBI-2042436">
        <id>Q9SCY5</id>
    </interactant>
    <interactant intactId="EBI-2360649">
        <id>Q944A6</id>
        <label>SNF4</label>
    </interactant>
    <organismsDiffer>false</organismsDiffer>
    <experiments>18</experiments>
</comment>
<comment type="subcellular location">
    <subcellularLocation>
        <location evidence="6">Cell membrane</location>
    </subcellularLocation>
</comment>
<comment type="alternative products">
    <event type="alternative splicing"/>
    <isoform>
        <id>Q9SCY5-1</id>
        <name>1</name>
        <sequence type="displayed"/>
    </isoform>
    <text>A number of isoforms are produced. According to EST sequences.</text>
</comment>
<comment type="tissue specificity">
    <text evidence="2">Expressed in leaves, stems, roots, flower buds and flowers. Not detectable in siliques.</text>
</comment>
<comment type="induction">
    <text evidence="2">Repressed in the dark.</text>
</comment>
<comment type="domain">
    <text evidence="3">Kinase-interacting sequence (KIS) is specific for the alpha catalytic subunit interaction and Association with SNF1 Complex (ASC) is specific for the gamma non-catalytic regulatory subunit interaction.</text>
</comment>
<comment type="PTM">
    <text evidence="8">Sumoylated.</text>
</comment>
<comment type="similarity">
    <text evidence="10">Belongs to the 5'-AMP-activated protein kinase beta subunit family.</text>
</comment>
<comment type="sequence caution" evidence="10">
    <conflict type="frameshift">
        <sequence resource="EMBL-CDS" id="CAB10413"/>
    </conflict>
</comment>
<comment type="sequence caution" evidence="10">
    <conflict type="frameshift">
        <sequence resource="EMBL-CDS" id="CAB78678"/>
    </conflict>
</comment>
<reference key="1">
    <citation type="journal article" date="1999" name="Plant J.">
        <title>Arabidopsis thaliana proteins related to the yeast SIP and SNF4 interact with AKINalpha1, an SNF1-like protein kinase.</title>
        <authorList>
            <person name="Bouly J.-P."/>
            <person name="Gissot L."/>
            <person name="Lessard P."/>
            <person name="Kreis M."/>
            <person name="Thomas M."/>
        </authorList>
    </citation>
    <scope>NUCLEOTIDE SEQUENCE [MRNA]</scope>
    <scope>INTERACTION WITH KIN11 AND KING1</scope>
    <scope>INDUCTION</scope>
    <scope>TISSUE SPECIFICITY</scope>
    <source>
        <strain>cv. Columbia</strain>
    </source>
</reference>
<reference key="2">
    <citation type="journal article" date="1998" name="Nature">
        <title>Analysis of 1.9 Mb of contiguous sequence from chromosome 4 of Arabidopsis thaliana.</title>
        <authorList>
            <person name="Bevan M."/>
            <person name="Bancroft I."/>
            <person name="Bent E."/>
            <person name="Love K."/>
            <person name="Goodman H.M."/>
            <person name="Dean C."/>
            <person name="Bergkamp R."/>
            <person name="Dirkse W."/>
            <person name="van Staveren M."/>
            <person name="Stiekema W."/>
            <person name="Drost L."/>
            <person name="Ridley P."/>
            <person name="Hudson S.-A."/>
            <person name="Patel K."/>
            <person name="Murphy G."/>
            <person name="Piffanelli P."/>
            <person name="Wedler H."/>
            <person name="Wedler E."/>
            <person name="Wambutt R."/>
            <person name="Weitzenegger T."/>
            <person name="Pohl T."/>
            <person name="Terryn N."/>
            <person name="Gielen J."/>
            <person name="Villarroel R."/>
            <person name="De Clercq R."/>
            <person name="van Montagu M."/>
            <person name="Lecharny A."/>
            <person name="Aubourg S."/>
            <person name="Gy I."/>
            <person name="Kreis M."/>
            <person name="Lao N."/>
            <person name="Kavanagh T."/>
            <person name="Hempel S."/>
            <person name="Kotter P."/>
            <person name="Entian K.-D."/>
            <person name="Rieger M."/>
            <person name="Schaefer M."/>
            <person name="Funk B."/>
            <person name="Mueller-Auer S."/>
            <person name="Silvey M."/>
            <person name="James R."/>
            <person name="Monfort A."/>
            <person name="Pons A."/>
            <person name="Puigdomenech P."/>
            <person name="Douka A."/>
            <person name="Voukelatou E."/>
            <person name="Milioni D."/>
            <person name="Hatzopoulos P."/>
            <person name="Piravandi E."/>
            <person name="Obermaier B."/>
            <person name="Hilbert H."/>
            <person name="Duesterhoeft A."/>
            <person name="Moores T."/>
            <person name="Jones J.D.G."/>
            <person name="Eneva T."/>
            <person name="Palme K."/>
            <person name="Benes V."/>
            <person name="Rechmann S."/>
            <person name="Ansorge W."/>
            <person name="Cooke R."/>
            <person name="Berger C."/>
            <person name="Delseny M."/>
            <person name="Voet M."/>
            <person name="Volckaert G."/>
            <person name="Mewes H.-W."/>
            <person name="Klosterman S."/>
            <person name="Schueller C."/>
            <person name="Chalwatzis N."/>
        </authorList>
    </citation>
    <scope>NUCLEOTIDE SEQUENCE [LARGE SCALE GENOMIC DNA]</scope>
    <source>
        <strain>cv. Columbia</strain>
    </source>
</reference>
<reference key="3">
    <citation type="journal article" date="1999" name="Nature">
        <title>Sequence and analysis of chromosome 4 of the plant Arabidopsis thaliana.</title>
        <authorList>
            <person name="Mayer K.F.X."/>
            <person name="Schueller C."/>
            <person name="Wambutt R."/>
            <person name="Murphy G."/>
            <person name="Volckaert G."/>
            <person name="Pohl T."/>
            <person name="Duesterhoeft A."/>
            <person name="Stiekema W."/>
            <person name="Entian K.-D."/>
            <person name="Terryn N."/>
            <person name="Harris B."/>
            <person name="Ansorge W."/>
            <person name="Brandt P."/>
            <person name="Grivell L.A."/>
            <person name="Rieger M."/>
            <person name="Weichselgartner M."/>
            <person name="de Simone V."/>
            <person name="Obermaier B."/>
            <person name="Mache R."/>
            <person name="Mueller M."/>
            <person name="Kreis M."/>
            <person name="Delseny M."/>
            <person name="Puigdomenech P."/>
            <person name="Watson M."/>
            <person name="Schmidtheini T."/>
            <person name="Reichert B."/>
            <person name="Portetelle D."/>
            <person name="Perez-Alonso M."/>
            <person name="Boutry M."/>
            <person name="Bancroft I."/>
            <person name="Vos P."/>
            <person name="Hoheisel J."/>
            <person name="Zimmermann W."/>
            <person name="Wedler H."/>
            <person name="Ridley P."/>
            <person name="Langham S.-A."/>
            <person name="McCullagh B."/>
            <person name="Bilham L."/>
            <person name="Robben J."/>
            <person name="van der Schueren J."/>
            <person name="Grymonprez B."/>
            <person name="Chuang Y.-J."/>
            <person name="Vandenbussche F."/>
            <person name="Braeken M."/>
            <person name="Weltjens I."/>
            <person name="Voet M."/>
            <person name="Bastiaens I."/>
            <person name="Aert R."/>
            <person name="Defoor E."/>
            <person name="Weitzenegger T."/>
            <person name="Bothe G."/>
            <person name="Ramsperger U."/>
            <person name="Hilbert H."/>
            <person name="Braun M."/>
            <person name="Holzer E."/>
            <person name="Brandt A."/>
            <person name="Peters S."/>
            <person name="van Staveren M."/>
            <person name="Dirkse W."/>
            <person name="Mooijman P."/>
            <person name="Klein Lankhorst R."/>
            <person name="Rose M."/>
            <person name="Hauf J."/>
            <person name="Koetter P."/>
            <person name="Berneiser S."/>
            <person name="Hempel S."/>
            <person name="Feldpausch M."/>
            <person name="Lamberth S."/>
            <person name="Van den Daele H."/>
            <person name="De Keyser A."/>
            <person name="Buysshaert C."/>
            <person name="Gielen J."/>
            <person name="Villarroel R."/>
            <person name="De Clercq R."/>
            <person name="van Montagu M."/>
            <person name="Rogers J."/>
            <person name="Cronin A."/>
            <person name="Quail M.A."/>
            <person name="Bray-Allen S."/>
            <person name="Clark L."/>
            <person name="Doggett J."/>
            <person name="Hall S."/>
            <person name="Kay M."/>
            <person name="Lennard N."/>
            <person name="McLay K."/>
            <person name="Mayes R."/>
            <person name="Pettett A."/>
            <person name="Rajandream M.A."/>
            <person name="Lyne M."/>
            <person name="Benes V."/>
            <person name="Rechmann S."/>
            <person name="Borkova D."/>
            <person name="Bloecker H."/>
            <person name="Scharfe M."/>
            <person name="Grimm M."/>
            <person name="Loehnert T.-H."/>
            <person name="Dose S."/>
            <person name="de Haan M."/>
            <person name="Maarse A.C."/>
            <person name="Schaefer M."/>
            <person name="Mueller-Auer S."/>
            <person name="Gabel C."/>
            <person name="Fuchs M."/>
            <person name="Fartmann B."/>
            <person name="Granderath K."/>
            <person name="Dauner D."/>
            <person name="Herzl A."/>
            <person name="Neumann S."/>
            <person name="Argiriou A."/>
            <person name="Vitale D."/>
            <person name="Liguori R."/>
            <person name="Piravandi E."/>
            <person name="Massenet O."/>
            <person name="Quigley F."/>
            <person name="Clabauld G."/>
            <person name="Muendlein A."/>
            <person name="Felber R."/>
            <person name="Schnabl S."/>
            <person name="Hiller R."/>
            <person name="Schmidt W."/>
            <person name="Lecharny A."/>
            <person name="Aubourg S."/>
            <person name="Chefdor F."/>
            <person name="Cooke R."/>
            <person name="Berger C."/>
            <person name="Monfort A."/>
            <person name="Casacuberta E."/>
            <person name="Gibbons T."/>
            <person name="Weber N."/>
            <person name="Vandenbol M."/>
            <person name="Bargues M."/>
            <person name="Terol J."/>
            <person name="Torres A."/>
            <person name="Perez-Perez A."/>
            <person name="Purnelle B."/>
            <person name="Bent E."/>
            <person name="Johnson S."/>
            <person name="Tacon D."/>
            <person name="Jesse T."/>
            <person name="Heijnen L."/>
            <person name="Schwarz S."/>
            <person name="Scholler P."/>
            <person name="Heber S."/>
            <person name="Francs P."/>
            <person name="Bielke C."/>
            <person name="Frishman D."/>
            <person name="Haase D."/>
            <person name="Lemcke K."/>
            <person name="Mewes H.-W."/>
            <person name="Stocker S."/>
            <person name="Zaccaria P."/>
            <person name="Bevan M."/>
            <person name="Wilson R.K."/>
            <person name="de la Bastide M."/>
            <person name="Habermann K."/>
            <person name="Parnell L."/>
            <person name="Dedhia N."/>
            <person name="Gnoj L."/>
            <person name="Schutz K."/>
            <person name="Huang E."/>
            <person name="Spiegel L."/>
            <person name="Sekhon M."/>
            <person name="Murray J."/>
            <person name="Sheet P."/>
            <person name="Cordes M."/>
            <person name="Abu-Threideh J."/>
            <person name="Stoneking T."/>
            <person name="Kalicki J."/>
            <person name="Graves T."/>
            <person name="Harmon G."/>
            <person name="Edwards J."/>
            <person name="Latreille P."/>
            <person name="Courtney L."/>
            <person name="Cloud J."/>
            <person name="Abbott A."/>
            <person name="Scott K."/>
            <person name="Johnson D."/>
            <person name="Minx P."/>
            <person name="Bentley D."/>
            <person name="Fulton B."/>
            <person name="Miller N."/>
            <person name="Greco T."/>
            <person name="Kemp K."/>
            <person name="Kramer J."/>
            <person name="Fulton L."/>
            <person name="Mardis E."/>
            <person name="Dante M."/>
            <person name="Pepin K."/>
            <person name="Hillier L.W."/>
            <person name="Nelson J."/>
            <person name="Spieth J."/>
            <person name="Ryan E."/>
            <person name="Andrews S."/>
            <person name="Geisel C."/>
            <person name="Layman D."/>
            <person name="Du H."/>
            <person name="Ali J."/>
            <person name="Berghoff A."/>
            <person name="Jones K."/>
            <person name="Drone K."/>
            <person name="Cotton M."/>
            <person name="Joshu C."/>
            <person name="Antonoiu B."/>
            <person name="Zidanic M."/>
            <person name="Strong C."/>
            <person name="Sun H."/>
            <person name="Lamar B."/>
            <person name="Yordan C."/>
            <person name="Ma P."/>
            <person name="Zhong J."/>
            <person name="Preston R."/>
            <person name="Vil D."/>
            <person name="Shekher M."/>
            <person name="Matero A."/>
            <person name="Shah R."/>
            <person name="Swaby I.K."/>
            <person name="O'Shaughnessy A."/>
            <person name="Rodriguez M."/>
            <person name="Hoffman J."/>
            <person name="Till S."/>
            <person name="Granat S."/>
            <person name="Shohdy N."/>
            <person name="Hasegawa A."/>
            <person name="Hameed A."/>
            <person name="Lodhi M."/>
            <person name="Johnson A."/>
            <person name="Chen E."/>
            <person name="Marra M.A."/>
            <person name="Martienssen R."/>
            <person name="McCombie W.R."/>
        </authorList>
    </citation>
    <scope>NUCLEOTIDE SEQUENCE [LARGE SCALE GENOMIC DNA]</scope>
    <source>
        <strain>cv. Columbia</strain>
    </source>
</reference>
<reference key="4">
    <citation type="journal article" date="2017" name="Plant J.">
        <title>Araport11: a complete reannotation of the Arabidopsis thaliana reference genome.</title>
        <authorList>
            <person name="Cheng C.Y."/>
            <person name="Krishnakumar V."/>
            <person name="Chan A.P."/>
            <person name="Thibaud-Nissen F."/>
            <person name="Schobel S."/>
            <person name="Town C.D."/>
        </authorList>
    </citation>
    <scope>GENOME REANNOTATION</scope>
    <source>
        <strain>cv. Columbia</strain>
    </source>
</reference>
<reference key="5">
    <citation type="journal article" date="2003" name="Science">
        <title>Empirical analysis of transcriptional activity in the Arabidopsis genome.</title>
        <authorList>
            <person name="Yamada K."/>
            <person name="Lim J."/>
            <person name="Dale J.M."/>
            <person name="Chen H."/>
            <person name="Shinn P."/>
            <person name="Palm C.J."/>
            <person name="Southwick A.M."/>
            <person name="Wu H.C."/>
            <person name="Kim C.J."/>
            <person name="Nguyen M."/>
            <person name="Pham P.K."/>
            <person name="Cheuk R.F."/>
            <person name="Karlin-Newmann G."/>
            <person name="Liu S.X."/>
            <person name="Lam B."/>
            <person name="Sakano H."/>
            <person name="Wu T."/>
            <person name="Yu G."/>
            <person name="Miranda M."/>
            <person name="Quach H.L."/>
            <person name="Tripp M."/>
            <person name="Chang C.H."/>
            <person name="Lee J.M."/>
            <person name="Toriumi M.J."/>
            <person name="Chan M.M."/>
            <person name="Tang C.C."/>
            <person name="Onodera C.S."/>
            <person name="Deng J.M."/>
            <person name="Akiyama K."/>
            <person name="Ansari Y."/>
            <person name="Arakawa T."/>
            <person name="Banh J."/>
            <person name="Banno F."/>
            <person name="Bowser L."/>
            <person name="Brooks S.Y."/>
            <person name="Carninci P."/>
            <person name="Chao Q."/>
            <person name="Choy N."/>
            <person name="Enju A."/>
            <person name="Goldsmith A.D."/>
            <person name="Gurjal M."/>
            <person name="Hansen N.F."/>
            <person name="Hayashizaki Y."/>
            <person name="Johnson-Hopson C."/>
            <person name="Hsuan V.W."/>
            <person name="Iida K."/>
            <person name="Karnes M."/>
            <person name="Khan S."/>
            <person name="Koesema E."/>
            <person name="Ishida J."/>
            <person name="Jiang P.X."/>
            <person name="Jones T."/>
            <person name="Kawai J."/>
            <person name="Kamiya A."/>
            <person name="Meyers C."/>
            <person name="Nakajima M."/>
            <person name="Narusaka M."/>
            <person name="Seki M."/>
            <person name="Sakurai T."/>
            <person name="Satou M."/>
            <person name="Tamse R."/>
            <person name="Vaysberg M."/>
            <person name="Wallender E.K."/>
            <person name="Wong C."/>
            <person name="Yamamura Y."/>
            <person name="Yuan S."/>
            <person name="Shinozaki K."/>
            <person name="Davis R.W."/>
            <person name="Theologis A."/>
            <person name="Ecker J.R."/>
        </authorList>
    </citation>
    <scope>NUCLEOTIDE SEQUENCE [LARGE SCALE MRNA]</scope>
    <source>
        <strain>cv. Columbia</strain>
    </source>
</reference>
<reference key="6">
    <citation type="submission" date="2004-12" db="EMBL/GenBank/DDBJ databases">
        <title>Arabidopsis cDNA clones.</title>
        <authorList>
            <person name="Shinn P."/>
            <person name="Chen H."/>
            <person name="Cheuk R.F."/>
            <person name="Kim C.J."/>
            <person name="Ecker J.R."/>
        </authorList>
    </citation>
    <scope>NUCLEOTIDE SEQUENCE [LARGE SCALE MRNA]</scope>
</reference>
<reference key="7">
    <citation type="journal article" date="2001" name="EMBO Rep.">
        <title>Domain fusion between SNF1-related kinase subunits during plant evolution.</title>
        <authorList>
            <person name="Lumbreras V."/>
            <person name="Alba M.M."/>
            <person name="Kleinow T."/>
            <person name="Koncz C."/>
            <person name="Pages M."/>
        </authorList>
    </citation>
    <scope>DOMAIN KIS</scope>
</reference>
<reference key="8">
    <citation type="journal article" date="2001" name="Nucleic Acids Res.">
        <title>Detection of in vivo protein interactions between Snf1-related kinase subunits with intron-tagged epitope-labelling in plants cells.</title>
        <authorList>
            <person name="Ferrando A."/>
            <person name="Koncz-Kalman Z."/>
            <person name="Farras R."/>
            <person name="Tiburcio A."/>
            <person name="Schell J."/>
            <person name="Koncz C."/>
        </authorList>
    </citation>
    <scope>INTERACTION WITH KIN10 AND KIN11</scope>
</reference>
<reference key="9">
    <citation type="journal article" date="2006" name="Plant Physiol.">
        <title>AKINbetagamma contributes to SnRK1 heterotrimeric complexes and interacts with two proteins implicated in plant pathogen resistance through its KIS/GBD sequence.</title>
        <authorList>
            <person name="Gissot L."/>
            <person name="Polge C."/>
            <person name="Jossier M."/>
            <person name="Girin T."/>
            <person name="Bouly J.-P."/>
            <person name="Kreis M."/>
            <person name="Thomas M."/>
        </authorList>
    </citation>
    <scope>INTERACTION WITH SNF4</scope>
    <scope>COMPONENT OF A HETEROTRIMERIC COMPLEX</scope>
    <scope>SUBUNIT</scope>
</reference>
<reference key="10">
    <citation type="journal article" date="2007" name="Plant Cell">
        <title>N-myristoylation regulates the SnRK1 pathway in Arabidopsis.</title>
        <authorList>
            <person name="Pierre M."/>
            <person name="Traverso J.A."/>
            <person name="Boisson B."/>
            <person name="Domenichini S."/>
            <person name="Bouchez D."/>
            <person name="Giglione C."/>
            <person name="Meinnel T."/>
        </authorList>
    </citation>
    <scope>MYRISTOYLATION AT GLY-2</scope>
    <scope>MUTAGENESIS OF GLY-2</scope>
    <scope>SUBCELLULAR LOCATION</scope>
</reference>
<reference key="11">
    <citation type="journal article" date="2007" name="Trends Plant Sci.">
        <title>SNF1/AMPK/SnRK1 kinases, global regulators at the heart of energy control?</title>
        <authorList>
            <person name="Polge C."/>
            <person name="Thomas M."/>
        </authorList>
    </citation>
    <scope>REVIEW</scope>
</reference>
<reference key="12">
    <citation type="journal article" date="2015" name="Plant J.">
        <title>SnRK1 from Arabidopsis thaliana is an atypical AMPK.</title>
        <authorList>
            <person name="Emanuelle S."/>
            <person name="Hossain M.I."/>
            <person name="Moller I.E."/>
            <person name="Pedersen H.L."/>
            <person name="van de Meene A.M."/>
            <person name="Doblin M.S."/>
            <person name="Koay A."/>
            <person name="Oakhill J.S."/>
            <person name="Scott J.W."/>
            <person name="Willats W.G."/>
            <person name="Kemp B.E."/>
            <person name="Bacic A."/>
            <person name="Gooley P.R."/>
            <person name="Stapleton D.I."/>
        </authorList>
    </citation>
    <scope>COMPONENT OF A HETEROTRIMERIC COMPLEX</scope>
    <scope>SUBUNIT</scope>
</reference>
<reference key="13">
    <citation type="journal article" date="2016" name="EXS">
        <title>Plant SnRK1 kinases: structure, regulation, and function.</title>
        <authorList>
            <person name="Margalha L."/>
            <person name="Valerio C."/>
            <person name="Baena-Gonzalez E."/>
        </authorList>
    </citation>
    <scope>REVIEW</scope>
</reference>
<reference key="14">
    <citation type="journal article" date="2016" name="Plant J.">
        <title>SUMOylation represses SnRK1 signaling in Arabidopsis.</title>
        <authorList>
            <person name="Crozet P."/>
            <person name="Margalha L."/>
            <person name="Butowt R."/>
            <person name="Fernandes N."/>
            <person name="Elias C.A."/>
            <person name="Orosa B."/>
            <person name="Tomanov K."/>
            <person name="Teige M."/>
            <person name="Bachmair A."/>
            <person name="Sadanandom A."/>
            <person name="Baena-Gonzalez E."/>
        </authorList>
    </citation>
    <scope>SUMOYLATION</scope>
</reference>
<reference key="15">
    <citation type="journal article" date="2018" name="J. Biol. Chem.">
        <title>The FCS-like zinc finger scaffold of the kinase SnRK1 is formed by the coordinated actions of the FLZ domain and intrinsically disordered regions.</title>
        <authorList>
            <person name="Jamsheer K M."/>
            <person name="Shukla B.N."/>
            <person name="Jindal S."/>
            <person name="Gopan N."/>
            <person name="Mannully C.T."/>
            <person name="Laxmi A."/>
        </authorList>
    </citation>
    <scope>INTERACTION WITH FLZ PROTEINS</scope>
</reference>
<dbReference type="EMBL" id="AJ132316">
    <property type="protein sequence ID" value="CAB64719.1"/>
    <property type="molecule type" value="mRNA"/>
</dbReference>
<dbReference type="EMBL" id="Z97341">
    <property type="protein sequence ID" value="CAB10413.1"/>
    <property type="status" value="ALT_FRAME"/>
    <property type="molecule type" value="Genomic_DNA"/>
</dbReference>
<dbReference type="EMBL" id="AL161543">
    <property type="protein sequence ID" value="CAB78678.1"/>
    <property type="status" value="ALT_FRAME"/>
    <property type="molecule type" value="Genomic_DNA"/>
</dbReference>
<dbReference type="EMBL" id="CP002687">
    <property type="protein sequence ID" value="AEE83735.2"/>
    <property type="molecule type" value="Genomic_DNA"/>
</dbReference>
<dbReference type="EMBL" id="AF360248">
    <property type="protein sequence ID" value="AAK25958.1"/>
    <property type="molecule type" value="mRNA"/>
</dbReference>
<dbReference type="EMBL" id="BT020423">
    <property type="protein sequence ID" value="AAW28550.1"/>
    <property type="molecule type" value="mRNA"/>
</dbReference>
<dbReference type="PIR" id="C71430">
    <property type="entry name" value="C71430"/>
</dbReference>
<dbReference type="RefSeq" id="NP_193369.3">
    <property type="nucleotide sequence ID" value="NM_117731.7"/>
</dbReference>
<dbReference type="SMR" id="Q9SCY5"/>
<dbReference type="BioGRID" id="12624">
    <property type="interactions" value="58"/>
</dbReference>
<dbReference type="FunCoup" id="Q9SCY5">
    <property type="interactions" value="2230"/>
</dbReference>
<dbReference type="IntAct" id="Q9SCY5">
    <property type="interactions" value="63"/>
</dbReference>
<dbReference type="STRING" id="3702.Q9SCY5"/>
<dbReference type="CAZy" id="CBM48">
    <property type="family name" value="Carbohydrate-Binding Module Family 48"/>
</dbReference>
<dbReference type="iPTMnet" id="Q9SCY5"/>
<dbReference type="PaxDb" id="3702-AT4G16360.3"/>
<dbReference type="PeptideAtlas" id="Q9SCY5"/>
<dbReference type="ProteomicsDB" id="237090">
    <molecule id="Q9SCY5-1"/>
</dbReference>
<dbReference type="GeneID" id="827331"/>
<dbReference type="KEGG" id="ath:AT4G16360"/>
<dbReference type="Araport" id="AT4G16360"/>
<dbReference type="TAIR" id="AT4G16360"/>
<dbReference type="eggNOG" id="KOG1616">
    <property type="taxonomic scope" value="Eukaryota"/>
</dbReference>
<dbReference type="InParanoid" id="Q9SCY5"/>
<dbReference type="OrthoDB" id="531008at2759"/>
<dbReference type="PhylomeDB" id="Q9SCY5"/>
<dbReference type="PRO" id="PR:Q9SCY5"/>
<dbReference type="Proteomes" id="UP000006548">
    <property type="component" value="Chromosome 4"/>
</dbReference>
<dbReference type="ExpressionAtlas" id="Q9SCY5">
    <property type="expression patterns" value="baseline and differential"/>
</dbReference>
<dbReference type="GO" id="GO:0009507">
    <property type="term" value="C:chloroplast"/>
    <property type="evidence" value="ECO:0007669"/>
    <property type="project" value="UniProtKB-ARBA"/>
</dbReference>
<dbReference type="GO" id="GO:0005886">
    <property type="term" value="C:plasma membrane"/>
    <property type="evidence" value="ECO:0007669"/>
    <property type="project" value="UniProtKB-SubCell"/>
</dbReference>
<dbReference type="GO" id="GO:0005524">
    <property type="term" value="F:ATP binding"/>
    <property type="evidence" value="ECO:0007669"/>
    <property type="project" value="UniProtKB-KW"/>
</dbReference>
<dbReference type="GO" id="GO:0006633">
    <property type="term" value="P:fatty acid biosynthetic process"/>
    <property type="evidence" value="ECO:0007669"/>
    <property type="project" value="UniProtKB-KW"/>
</dbReference>
<dbReference type="GO" id="GO:0042128">
    <property type="term" value="P:nitrate assimilation"/>
    <property type="evidence" value="ECO:0007669"/>
    <property type="project" value="UniProtKB-KW"/>
</dbReference>
<dbReference type="CDD" id="cd02859">
    <property type="entry name" value="E_set_AMPKbeta_like_N"/>
    <property type="match status" value="1"/>
</dbReference>
<dbReference type="Gene3D" id="6.20.250.60">
    <property type="match status" value="1"/>
</dbReference>
<dbReference type="Gene3D" id="2.60.40.10">
    <property type="entry name" value="Immunoglobulins"/>
    <property type="match status" value="1"/>
</dbReference>
<dbReference type="InterPro" id="IPR032640">
    <property type="entry name" value="AMPK1_CBM"/>
</dbReference>
<dbReference type="InterPro" id="IPR006828">
    <property type="entry name" value="ASC_dom"/>
</dbReference>
<dbReference type="InterPro" id="IPR037256">
    <property type="entry name" value="ASC_dom_sf"/>
</dbReference>
<dbReference type="InterPro" id="IPR013783">
    <property type="entry name" value="Ig-like_fold"/>
</dbReference>
<dbReference type="InterPro" id="IPR014756">
    <property type="entry name" value="Ig_E-set"/>
</dbReference>
<dbReference type="InterPro" id="IPR043554">
    <property type="entry name" value="KINB"/>
</dbReference>
<dbReference type="PANTHER" id="PTHR46316">
    <property type="entry name" value="SNF1-RELATED PROTEIN KINASE REGULATORY SUBUNIT BETA-1"/>
    <property type="match status" value="1"/>
</dbReference>
<dbReference type="PANTHER" id="PTHR46316:SF2">
    <property type="entry name" value="SNF1-RELATED PROTEIN KINASE REGULATORY SUBUNIT BETA-2"/>
    <property type="match status" value="1"/>
</dbReference>
<dbReference type="Pfam" id="PF16561">
    <property type="entry name" value="AMPK1_CBM"/>
    <property type="match status" value="1"/>
</dbReference>
<dbReference type="Pfam" id="PF04739">
    <property type="entry name" value="AMPKBI"/>
    <property type="match status" value="1"/>
</dbReference>
<dbReference type="SMART" id="SM01010">
    <property type="entry name" value="AMPKBI"/>
    <property type="match status" value="1"/>
</dbReference>
<dbReference type="SUPFAM" id="SSF160219">
    <property type="entry name" value="AMPKBI-like"/>
    <property type="match status" value="1"/>
</dbReference>
<dbReference type="SUPFAM" id="SSF81296">
    <property type="entry name" value="E set domains"/>
    <property type="match status" value="1"/>
</dbReference>
<gene>
    <name type="primary">KINB2</name>
    <name type="ordered locus">At4g16360</name>
    <name type="ORF">dl4210w</name>
    <name type="ORF">FCAALL.163</name>
</gene>
<sequence>MGNVNAREEANSNNASAVEDEDAEICSREAMSAASDGNHVAPPELMGQSPPHSPRATQSPLMFAPQVPVLPLQRPDEIHIPNPSWMQSPSSLYEEASNEQGIPTMITWCHGGKEIAVEGSWDNWKTRSRLQRSGKDFTIMKVLPSGVYEYRFIVDGQWRHAPELPLARDDAGNTFNILDLQDYVPEDIQSISGFEPPQSPENSYSNLLLGAEDYSKEPPVVPPHLQMTLLNLPAANPDIPSPLPRPQHVILNHLYMQKGKSGPSVVALGSTHRFLAKYVTVVLYKSLQR</sequence>
<organism>
    <name type="scientific">Arabidopsis thaliana</name>
    <name type="common">Mouse-ear cress</name>
    <dbReference type="NCBI Taxonomy" id="3702"/>
    <lineage>
        <taxon>Eukaryota</taxon>
        <taxon>Viridiplantae</taxon>
        <taxon>Streptophyta</taxon>
        <taxon>Embryophyta</taxon>
        <taxon>Tracheophyta</taxon>
        <taxon>Spermatophyta</taxon>
        <taxon>Magnoliopsida</taxon>
        <taxon>eudicotyledons</taxon>
        <taxon>Gunneridae</taxon>
        <taxon>Pentapetalae</taxon>
        <taxon>rosids</taxon>
        <taxon>malvids</taxon>
        <taxon>Brassicales</taxon>
        <taxon>Brassicaceae</taxon>
        <taxon>Camelineae</taxon>
        <taxon>Arabidopsis</taxon>
    </lineage>
</organism>
<feature type="initiator methionine" description="Removed" evidence="6">
    <location>
        <position position="1"/>
    </location>
</feature>
<feature type="chain" id="PRO_0000204372" description="SNF1-related protein kinase regulatory subunit beta-2">
    <location>
        <begin position="2"/>
        <end position="289"/>
    </location>
</feature>
<feature type="region of interest" description="Disordered" evidence="1">
    <location>
        <begin position="1"/>
        <end position="59"/>
    </location>
</feature>
<feature type="region of interest" description="Kinase-interacting sequence (KIS)">
    <location>
        <begin position="103"/>
        <end position="180"/>
    </location>
</feature>
<feature type="region of interest" description="Association with SNF1 complex (ASC)">
    <location>
        <begin position="217"/>
        <end position="289"/>
    </location>
</feature>
<feature type="compositionally biased region" description="Basic and acidic residues" evidence="1">
    <location>
        <begin position="1"/>
        <end position="10"/>
    </location>
</feature>
<feature type="lipid moiety-binding region" description="N-myristoyl glycine" evidence="6">
    <location>
        <position position="2"/>
    </location>
</feature>
<feature type="mutagenesis site" description="Loss of plasma membrane localization." evidence="6">
    <original>G</original>
    <variation>A</variation>
    <location>
        <position position="2"/>
    </location>
</feature>
<feature type="sequence conflict" description="In Ref. 3; AEE83735." evidence="10" ref="3">
    <original>REEA</original>
    <variation>KENR</variation>
    <location>
        <begin position="7"/>
        <end position="10"/>
    </location>
</feature>
<feature type="sequence conflict" description="In Ref. 2; CAB10413 and 3; CAB78678." evidence="10" ref="2 3">
    <original>REEA</original>
    <variation>KRKP</variation>
    <location>
        <begin position="7"/>
        <end position="10"/>
    </location>
</feature>
<feature type="sequence conflict" description="In Ref. 2; CAB10413 and 3; CAB78678." evidence="10" ref="2 3">
    <original>E</original>
    <variation>D</variation>
    <location>
        <position position="195"/>
    </location>
</feature>
<name>KINB2_ARATH</name>
<keyword id="KW-0025">Alternative splicing</keyword>
<keyword id="KW-0067">ATP-binding</keyword>
<keyword id="KW-0119">Carbohydrate metabolism</keyword>
<keyword id="KW-1003">Cell membrane</keyword>
<keyword id="KW-0275">Fatty acid biosynthesis</keyword>
<keyword id="KW-0276">Fatty acid metabolism</keyword>
<keyword id="KW-0444">Lipid biosynthesis</keyword>
<keyword id="KW-0443">Lipid metabolism</keyword>
<keyword id="KW-0449">Lipoprotein</keyword>
<keyword id="KW-0472">Membrane</keyword>
<keyword id="KW-0519">Myristate</keyword>
<keyword id="KW-0534">Nitrate assimilation</keyword>
<keyword id="KW-0547">Nucleotide-binding</keyword>
<keyword id="KW-1185">Reference proteome</keyword>
<keyword id="KW-0832">Ubl conjugation</keyword>
<evidence type="ECO:0000256" key="1">
    <source>
        <dbReference type="SAM" id="MobiDB-lite"/>
    </source>
</evidence>
<evidence type="ECO:0000269" key="2">
    <source>
    </source>
</evidence>
<evidence type="ECO:0000269" key="3">
    <source>
    </source>
</evidence>
<evidence type="ECO:0000269" key="4">
    <source>
    </source>
</evidence>
<evidence type="ECO:0000269" key="5">
    <source>
    </source>
</evidence>
<evidence type="ECO:0000269" key="6">
    <source>
    </source>
</evidence>
<evidence type="ECO:0000269" key="7">
    <source>
    </source>
</evidence>
<evidence type="ECO:0000269" key="8">
    <source>
    </source>
</evidence>
<evidence type="ECO:0000269" key="9">
    <source>
    </source>
</evidence>
<evidence type="ECO:0000305" key="10"/>
<accession>Q9SCY5</accession>
<accession>F4JLS7</accession>
<accession>O23481</accession>
<proteinExistence type="evidence at protein level"/>
<protein>
    <recommendedName>
        <fullName>SNF1-related protein kinase regulatory subunit beta-2</fullName>
        <shortName>AKIN subunit beta-2</shortName>
        <shortName>AKINB2</shortName>
        <shortName>AKINbeta2</shortName>
    </recommendedName>
</protein>